<protein>
    <recommendedName>
        <fullName evidence="1">4-hydroxy-tetrahydrodipicolinate synthase</fullName>
        <shortName evidence="1">HTPA synthase</shortName>
        <ecNumber evidence="1">4.3.3.7</ecNumber>
    </recommendedName>
</protein>
<accession>Q4L6A0</accession>
<reference key="1">
    <citation type="journal article" date="2005" name="J. Bacteriol.">
        <title>Whole-genome sequencing of Staphylococcus haemolyticus uncovers the extreme plasticity of its genome and the evolution of human-colonizing staphylococcal species.</title>
        <authorList>
            <person name="Takeuchi F."/>
            <person name="Watanabe S."/>
            <person name="Baba T."/>
            <person name="Yuzawa H."/>
            <person name="Ito T."/>
            <person name="Morimoto Y."/>
            <person name="Kuroda M."/>
            <person name="Cui L."/>
            <person name="Takahashi M."/>
            <person name="Ankai A."/>
            <person name="Baba S."/>
            <person name="Fukui S."/>
            <person name="Lee J.C."/>
            <person name="Hiramatsu K."/>
        </authorList>
    </citation>
    <scope>NUCLEOTIDE SEQUENCE [LARGE SCALE GENOMIC DNA]</scope>
    <source>
        <strain>JCSC1435</strain>
    </source>
</reference>
<proteinExistence type="inferred from homology"/>
<feature type="chain" id="PRO_0000103163" description="4-hydroxy-tetrahydrodipicolinate synthase">
    <location>
        <begin position="1"/>
        <end position="294"/>
    </location>
</feature>
<feature type="active site" description="Proton donor/acceptor" evidence="1">
    <location>
        <position position="135"/>
    </location>
</feature>
<feature type="active site" description="Schiff-base intermediate with substrate" evidence="1">
    <location>
        <position position="163"/>
    </location>
</feature>
<feature type="binding site" evidence="1">
    <location>
        <position position="47"/>
    </location>
    <ligand>
        <name>pyruvate</name>
        <dbReference type="ChEBI" id="CHEBI:15361"/>
    </ligand>
</feature>
<feature type="binding site" evidence="1">
    <location>
        <position position="206"/>
    </location>
    <ligand>
        <name>pyruvate</name>
        <dbReference type="ChEBI" id="CHEBI:15361"/>
    </ligand>
</feature>
<feature type="site" description="Part of a proton relay during catalysis" evidence="1">
    <location>
        <position position="46"/>
    </location>
</feature>
<feature type="site" description="Part of a proton relay during catalysis" evidence="1">
    <location>
        <position position="109"/>
    </location>
</feature>
<gene>
    <name evidence="1" type="primary">dapA</name>
    <name type="ordered locus">SH1516</name>
</gene>
<comment type="function">
    <text evidence="1">Catalyzes the condensation of (S)-aspartate-beta-semialdehyde [(S)-ASA] and pyruvate to 4-hydroxy-tetrahydrodipicolinate (HTPA).</text>
</comment>
<comment type="catalytic activity">
    <reaction evidence="1">
        <text>L-aspartate 4-semialdehyde + pyruvate = (2S,4S)-4-hydroxy-2,3,4,5-tetrahydrodipicolinate + H2O + H(+)</text>
        <dbReference type="Rhea" id="RHEA:34171"/>
        <dbReference type="ChEBI" id="CHEBI:15361"/>
        <dbReference type="ChEBI" id="CHEBI:15377"/>
        <dbReference type="ChEBI" id="CHEBI:15378"/>
        <dbReference type="ChEBI" id="CHEBI:67139"/>
        <dbReference type="ChEBI" id="CHEBI:537519"/>
        <dbReference type="EC" id="4.3.3.7"/>
    </reaction>
</comment>
<comment type="pathway">
    <text evidence="1">Amino-acid biosynthesis; L-lysine biosynthesis via DAP pathway; (S)-tetrahydrodipicolinate from L-aspartate: step 3/4.</text>
</comment>
<comment type="subunit">
    <text evidence="1">Homodimer.</text>
</comment>
<comment type="subcellular location">
    <subcellularLocation>
        <location evidence="1">Cytoplasm</location>
    </subcellularLocation>
</comment>
<comment type="similarity">
    <text evidence="1">Belongs to the DapA family.</text>
</comment>
<comment type="caution">
    <text evidence="2">Was originally thought to be a dihydrodipicolinate synthase (DHDPS), catalyzing the condensation of (S)-aspartate-beta-semialdehyde [(S)-ASA] and pyruvate to dihydrodipicolinate (DHDP). However, it was shown in E.coli that the product of the enzymatic reaction is not dihydrodipicolinate but in fact (4S)-4-hydroxy-2,3,4,5-tetrahydro-(2S)-dipicolinic acid (HTPA), and that the consecutive dehydration reaction leading to DHDP is not spontaneous but catalyzed by DapB.</text>
</comment>
<keyword id="KW-0028">Amino-acid biosynthesis</keyword>
<keyword id="KW-0963">Cytoplasm</keyword>
<keyword id="KW-0220">Diaminopimelate biosynthesis</keyword>
<keyword id="KW-0456">Lyase</keyword>
<keyword id="KW-0457">Lysine biosynthesis</keyword>
<keyword id="KW-0704">Schiff base</keyword>
<dbReference type="EC" id="4.3.3.7" evidence="1"/>
<dbReference type="EMBL" id="AP006716">
    <property type="protein sequence ID" value="BAE04825.1"/>
    <property type="molecule type" value="Genomic_DNA"/>
</dbReference>
<dbReference type="RefSeq" id="WP_011275808.1">
    <property type="nucleotide sequence ID" value="NC_007168.1"/>
</dbReference>
<dbReference type="SMR" id="Q4L6A0"/>
<dbReference type="KEGG" id="sha:SH1516"/>
<dbReference type="eggNOG" id="COG0329">
    <property type="taxonomic scope" value="Bacteria"/>
</dbReference>
<dbReference type="HOGENOM" id="CLU_049343_7_0_9"/>
<dbReference type="OrthoDB" id="9782828at2"/>
<dbReference type="UniPathway" id="UPA00034">
    <property type="reaction ID" value="UER00017"/>
</dbReference>
<dbReference type="Proteomes" id="UP000000543">
    <property type="component" value="Chromosome"/>
</dbReference>
<dbReference type="GO" id="GO:0005829">
    <property type="term" value="C:cytosol"/>
    <property type="evidence" value="ECO:0007669"/>
    <property type="project" value="TreeGrafter"/>
</dbReference>
<dbReference type="GO" id="GO:0008840">
    <property type="term" value="F:4-hydroxy-tetrahydrodipicolinate synthase activity"/>
    <property type="evidence" value="ECO:0007669"/>
    <property type="project" value="UniProtKB-UniRule"/>
</dbReference>
<dbReference type="GO" id="GO:0019877">
    <property type="term" value="P:diaminopimelate biosynthetic process"/>
    <property type="evidence" value="ECO:0007669"/>
    <property type="project" value="UniProtKB-UniRule"/>
</dbReference>
<dbReference type="GO" id="GO:0009089">
    <property type="term" value="P:lysine biosynthetic process via diaminopimelate"/>
    <property type="evidence" value="ECO:0007669"/>
    <property type="project" value="UniProtKB-UniRule"/>
</dbReference>
<dbReference type="CDD" id="cd00950">
    <property type="entry name" value="DHDPS"/>
    <property type="match status" value="1"/>
</dbReference>
<dbReference type="Gene3D" id="3.20.20.70">
    <property type="entry name" value="Aldolase class I"/>
    <property type="match status" value="1"/>
</dbReference>
<dbReference type="HAMAP" id="MF_00418">
    <property type="entry name" value="DapA"/>
    <property type="match status" value="1"/>
</dbReference>
<dbReference type="InterPro" id="IPR013785">
    <property type="entry name" value="Aldolase_TIM"/>
</dbReference>
<dbReference type="InterPro" id="IPR005263">
    <property type="entry name" value="DapA"/>
</dbReference>
<dbReference type="InterPro" id="IPR002220">
    <property type="entry name" value="DapA-like"/>
</dbReference>
<dbReference type="InterPro" id="IPR020625">
    <property type="entry name" value="Schiff_base-form_aldolases_AS"/>
</dbReference>
<dbReference type="NCBIfam" id="TIGR00674">
    <property type="entry name" value="dapA"/>
    <property type="match status" value="1"/>
</dbReference>
<dbReference type="PANTHER" id="PTHR12128:SF66">
    <property type="entry name" value="4-HYDROXY-2-OXOGLUTARATE ALDOLASE, MITOCHONDRIAL"/>
    <property type="match status" value="1"/>
</dbReference>
<dbReference type="PANTHER" id="PTHR12128">
    <property type="entry name" value="DIHYDRODIPICOLINATE SYNTHASE"/>
    <property type="match status" value="1"/>
</dbReference>
<dbReference type="Pfam" id="PF00701">
    <property type="entry name" value="DHDPS"/>
    <property type="match status" value="1"/>
</dbReference>
<dbReference type="PIRSF" id="PIRSF001365">
    <property type="entry name" value="DHDPS"/>
    <property type="match status" value="1"/>
</dbReference>
<dbReference type="PRINTS" id="PR00146">
    <property type="entry name" value="DHPICSNTHASE"/>
</dbReference>
<dbReference type="SMART" id="SM01130">
    <property type="entry name" value="DHDPS"/>
    <property type="match status" value="1"/>
</dbReference>
<dbReference type="SUPFAM" id="SSF51569">
    <property type="entry name" value="Aldolase"/>
    <property type="match status" value="1"/>
</dbReference>
<dbReference type="PROSITE" id="PS00666">
    <property type="entry name" value="DHDPS_2"/>
    <property type="match status" value="1"/>
</dbReference>
<organism>
    <name type="scientific">Staphylococcus haemolyticus (strain JCSC1435)</name>
    <dbReference type="NCBI Taxonomy" id="279808"/>
    <lineage>
        <taxon>Bacteria</taxon>
        <taxon>Bacillati</taxon>
        <taxon>Bacillota</taxon>
        <taxon>Bacilli</taxon>
        <taxon>Bacillales</taxon>
        <taxon>Staphylococcaceae</taxon>
        <taxon>Staphylococcus</taxon>
    </lineage>
</organism>
<sequence>MPHLFEGVGVALATPFTNNEVDYNALEKHVDFLLDNGVKAIIVNGTTAESPTLTEEEKEQVLESVIKQVNHRVTIIAGTGTNNTAKSIQASQRAKALGADAIMLITPYYNKTNQRGLVKHFETIANEVELPVVLYNVPSRTNMTIEPETVETLSHNQYIVAIKDATNDFEYYEDVKSRINQEEFALYSGNDDNVVEFYQRGGNGVISVIANAIPKEFQALYDAKQSGQDISNDFEPISKLLDALSVDVNPIPIKALTSHLGFGNYELRLPLLPLEDADAKVLINVFEQFKAGEL</sequence>
<name>DAPA_STAHJ</name>
<evidence type="ECO:0000255" key="1">
    <source>
        <dbReference type="HAMAP-Rule" id="MF_00418"/>
    </source>
</evidence>
<evidence type="ECO:0000305" key="2"/>